<name>MURC_DICTD</name>
<proteinExistence type="inferred from homology"/>
<reference key="1">
    <citation type="journal article" date="2016" name="Front. Microbiol.">
        <title>The complete genome sequence of hyperthermophile Dictyoglomus turgidum DSM 6724 reveals a specialized carbohydrate fermentor.</title>
        <authorList>
            <person name="Brumm P.J."/>
            <person name="Gowda K."/>
            <person name="Robb F.T."/>
            <person name="Mead D.A."/>
        </authorList>
    </citation>
    <scope>NUCLEOTIDE SEQUENCE [LARGE SCALE GENOMIC DNA]</scope>
    <source>
        <strain>DSM 6724 / Z-1310</strain>
    </source>
</reference>
<sequence length="464" mass="51764">MLNAKRIHFIGIAGTGMSALAYICVERGYEVSGSDIQENISTIRLKSKGVKIYKGHNPENVNNVDLVVISSAIPPDNEEYVYAKERNIPILHRSDLLADLTKEKKSIIVGGAHGKTTTTSMIALVLENNKIDPTILVGGELEDIGGNAKLGNGEYLVAEGDESDGSILKLDPYILVITNIDNDHLDYYKSLEKIKDTFLKVIEKVPKGGFAVLNLDCENVRDIIRKIKNKEYYTYGFSNADFKADNIVLNLSGSEFDVYFRNEKLGRVKLRVPGKHNILNSLSAIAVSKILGLDFETTTKALERFQGVQRRIQLKGIIEDDILVFDDYGHHPTEIKATLETLRLYNRRLVVVFQPHRYTRTYFLSKEIAEALSLGDVIILTEIYSAGEKPIPGVSSKNIYDEIREKYPNLEVYLVDNIIEAASKAKSILKKGDLLLTLGAGNVWKVGEALLARGRKDANLEYSQ</sequence>
<feature type="chain" id="PRO_1000117410" description="UDP-N-acetylmuramate--L-alanine ligase">
    <location>
        <begin position="1"/>
        <end position="464"/>
    </location>
</feature>
<feature type="binding site" evidence="1">
    <location>
        <begin position="111"/>
        <end position="117"/>
    </location>
    <ligand>
        <name>ATP</name>
        <dbReference type="ChEBI" id="CHEBI:30616"/>
    </ligand>
</feature>
<protein>
    <recommendedName>
        <fullName evidence="1">UDP-N-acetylmuramate--L-alanine ligase</fullName>
        <ecNumber evidence="1">6.3.2.8</ecNumber>
    </recommendedName>
    <alternativeName>
        <fullName evidence="1">UDP-N-acetylmuramoyl-L-alanine synthetase</fullName>
    </alternativeName>
</protein>
<evidence type="ECO:0000255" key="1">
    <source>
        <dbReference type="HAMAP-Rule" id="MF_00046"/>
    </source>
</evidence>
<gene>
    <name evidence="1" type="primary">murC</name>
    <name type="ordered locus">Dtur_1246</name>
</gene>
<accession>B8E324</accession>
<comment type="function">
    <text evidence="1">Cell wall formation.</text>
</comment>
<comment type="catalytic activity">
    <reaction evidence="1">
        <text>UDP-N-acetyl-alpha-D-muramate + L-alanine + ATP = UDP-N-acetyl-alpha-D-muramoyl-L-alanine + ADP + phosphate + H(+)</text>
        <dbReference type="Rhea" id="RHEA:23372"/>
        <dbReference type="ChEBI" id="CHEBI:15378"/>
        <dbReference type="ChEBI" id="CHEBI:30616"/>
        <dbReference type="ChEBI" id="CHEBI:43474"/>
        <dbReference type="ChEBI" id="CHEBI:57972"/>
        <dbReference type="ChEBI" id="CHEBI:70757"/>
        <dbReference type="ChEBI" id="CHEBI:83898"/>
        <dbReference type="ChEBI" id="CHEBI:456216"/>
        <dbReference type="EC" id="6.3.2.8"/>
    </reaction>
</comment>
<comment type="pathway">
    <text evidence="1">Cell wall biogenesis; peptidoglycan biosynthesis.</text>
</comment>
<comment type="subcellular location">
    <subcellularLocation>
        <location evidence="1">Cytoplasm</location>
    </subcellularLocation>
</comment>
<comment type="similarity">
    <text evidence="1">Belongs to the MurCDEF family.</text>
</comment>
<dbReference type="EC" id="6.3.2.8" evidence="1"/>
<dbReference type="EMBL" id="CP001251">
    <property type="protein sequence ID" value="ACK42524.1"/>
    <property type="molecule type" value="Genomic_DNA"/>
</dbReference>
<dbReference type="RefSeq" id="WP_012583606.1">
    <property type="nucleotide sequence ID" value="NC_011661.1"/>
</dbReference>
<dbReference type="RefSeq" id="YP_002353138.1">
    <property type="nucleotide sequence ID" value="NC_011661.1"/>
</dbReference>
<dbReference type="SMR" id="B8E324"/>
<dbReference type="FunCoup" id="B8E324">
    <property type="interactions" value="261"/>
</dbReference>
<dbReference type="STRING" id="515635.Dtur_1246"/>
<dbReference type="EnsemblBacteria" id="ACK42524">
    <property type="protein sequence ID" value="ACK42524"/>
    <property type="gene ID" value="Dtur_1246"/>
</dbReference>
<dbReference type="KEGG" id="dtu:Dtur_1246"/>
<dbReference type="PATRIC" id="fig|515635.4.peg.1286"/>
<dbReference type="eggNOG" id="COG0773">
    <property type="taxonomic scope" value="Bacteria"/>
</dbReference>
<dbReference type="HOGENOM" id="CLU_028104_2_2_0"/>
<dbReference type="InParanoid" id="B8E324"/>
<dbReference type="OrthoDB" id="9804126at2"/>
<dbReference type="UniPathway" id="UPA00219"/>
<dbReference type="Proteomes" id="UP000007719">
    <property type="component" value="Chromosome"/>
</dbReference>
<dbReference type="GO" id="GO:0005737">
    <property type="term" value="C:cytoplasm"/>
    <property type="evidence" value="ECO:0007669"/>
    <property type="project" value="UniProtKB-SubCell"/>
</dbReference>
<dbReference type="GO" id="GO:0005524">
    <property type="term" value="F:ATP binding"/>
    <property type="evidence" value="ECO:0007669"/>
    <property type="project" value="UniProtKB-UniRule"/>
</dbReference>
<dbReference type="GO" id="GO:0008763">
    <property type="term" value="F:UDP-N-acetylmuramate-L-alanine ligase activity"/>
    <property type="evidence" value="ECO:0007669"/>
    <property type="project" value="UniProtKB-UniRule"/>
</dbReference>
<dbReference type="GO" id="GO:0051301">
    <property type="term" value="P:cell division"/>
    <property type="evidence" value="ECO:0007669"/>
    <property type="project" value="UniProtKB-KW"/>
</dbReference>
<dbReference type="GO" id="GO:0071555">
    <property type="term" value="P:cell wall organization"/>
    <property type="evidence" value="ECO:0007669"/>
    <property type="project" value="UniProtKB-KW"/>
</dbReference>
<dbReference type="GO" id="GO:0009252">
    <property type="term" value="P:peptidoglycan biosynthetic process"/>
    <property type="evidence" value="ECO:0007669"/>
    <property type="project" value="UniProtKB-UniRule"/>
</dbReference>
<dbReference type="GO" id="GO:0008360">
    <property type="term" value="P:regulation of cell shape"/>
    <property type="evidence" value="ECO:0007669"/>
    <property type="project" value="UniProtKB-KW"/>
</dbReference>
<dbReference type="Gene3D" id="3.90.190.20">
    <property type="entry name" value="Mur ligase, C-terminal domain"/>
    <property type="match status" value="1"/>
</dbReference>
<dbReference type="Gene3D" id="3.40.1190.10">
    <property type="entry name" value="Mur-like, catalytic domain"/>
    <property type="match status" value="1"/>
</dbReference>
<dbReference type="Gene3D" id="3.40.50.720">
    <property type="entry name" value="NAD(P)-binding Rossmann-like Domain"/>
    <property type="match status" value="1"/>
</dbReference>
<dbReference type="HAMAP" id="MF_00046">
    <property type="entry name" value="MurC"/>
    <property type="match status" value="1"/>
</dbReference>
<dbReference type="InterPro" id="IPR036565">
    <property type="entry name" value="Mur-like_cat_sf"/>
</dbReference>
<dbReference type="InterPro" id="IPR004101">
    <property type="entry name" value="Mur_ligase_C"/>
</dbReference>
<dbReference type="InterPro" id="IPR036615">
    <property type="entry name" value="Mur_ligase_C_dom_sf"/>
</dbReference>
<dbReference type="InterPro" id="IPR013221">
    <property type="entry name" value="Mur_ligase_cen"/>
</dbReference>
<dbReference type="InterPro" id="IPR000713">
    <property type="entry name" value="Mur_ligase_N"/>
</dbReference>
<dbReference type="InterPro" id="IPR050061">
    <property type="entry name" value="MurCDEF_pg_biosynth"/>
</dbReference>
<dbReference type="InterPro" id="IPR005758">
    <property type="entry name" value="UDP-N-AcMur_Ala_ligase_MurC"/>
</dbReference>
<dbReference type="NCBIfam" id="TIGR01082">
    <property type="entry name" value="murC"/>
    <property type="match status" value="1"/>
</dbReference>
<dbReference type="PANTHER" id="PTHR43445:SF3">
    <property type="entry name" value="UDP-N-ACETYLMURAMATE--L-ALANINE LIGASE"/>
    <property type="match status" value="1"/>
</dbReference>
<dbReference type="PANTHER" id="PTHR43445">
    <property type="entry name" value="UDP-N-ACETYLMURAMATE--L-ALANINE LIGASE-RELATED"/>
    <property type="match status" value="1"/>
</dbReference>
<dbReference type="Pfam" id="PF01225">
    <property type="entry name" value="Mur_ligase"/>
    <property type="match status" value="1"/>
</dbReference>
<dbReference type="Pfam" id="PF02875">
    <property type="entry name" value="Mur_ligase_C"/>
    <property type="match status" value="1"/>
</dbReference>
<dbReference type="Pfam" id="PF08245">
    <property type="entry name" value="Mur_ligase_M"/>
    <property type="match status" value="1"/>
</dbReference>
<dbReference type="SUPFAM" id="SSF51984">
    <property type="entry name" value="MurCD N-terminal domain"/>
    <property type="match status" value="1"/>
</dbReference>
<dbReference type="SUPFAM" id="SSF53623">
    <property type="entry name" value="MurD-like peptide ligases, catalytic domain"/>
    <property type="match status" value="1"/>
</dbReference>
<dbReference type="SUPFAM" id="SSF53244">
    <property type="entry name" value="MurD-like peptide ligases, peptide-binding domain"/>
    <property type="match status" value="1"/>
</dbReference>
<keyword id="KW-0067">ATP-binding</keyword>
<keyword id="KW-0131">Cell cycle</keyword>
<keyword id="KW-0132">Cell division</keyword>
<keyword id="KW-0133">Cell shape</keyword>
<keyword id="KW-0961">Cell wall biogenesis/degradation</keyword>
<keyword id="KW-0963">Cytoplasm</keyword>
<keyword id="KW-0436">Ligase</keyword>
<keyword id="KW-0547">Nucleotide-binding</keyword>
<keyword id="KW-0573">Peptidoglycan synthesis</keyword>
<keyword id="KW-1185">Reference proteome</keyword>
<organism>
    <name type="scientific">Dictyoglomus turgidum (strain DSM 6724 / Z-1310)</name>
    <dbReference type="NCBI Taxonomy" id="515635"/>
    <lineage>
        <taxon>Bacteria</taxon>
        <taxon>Pseudomonadati</taxon>
        <taxon>Dictyoglomota</taxon>
        <taxon>Dictyoglomia</taxon>
        <taxon>Dictyoglomales</taxon>
        <taxon>Dictyoglomaceae</taxon>
        <taxon>Dictyoglomus</taxon>
    </lineage>
</organism>